<proteinExistence type="evidence at protein level"/>
<keyword id="KW-1003">Cell membrane</keyword>
<keyword id="KW-0449">Lipoprotein</keyword>
<keyword id="KW-0472">Membrane</keyword>
<keyword id="KW-0564">Palmitate</keyword>
<keyword id="KW-0597">Phosphoprotein</keyword>
<keyword id="KW-1185">Reference proteome</keyword>
<keyword id="KW-0812">Transmembrane</keyword>
<keyword id="KW-1133">Transmembrane helix</keyword>
<comment type="function">
    <text evidence="6 7 8 9">Regulatory subunit of anion-selective CLCNKA:BSND and CLCNKB:BSND heteromeric channels involved in basolateral chloride conductance along the nephron to achieve urine concentration and maintain systemic acid-base homeostasis, and in the stria vascularis of the inner ear to establish the endocochlear potential necessary for normal hearing (PubMed:11734858, PubMed:18833191, PubMed:21593186, PubMed:23791703). Most likely acts as a chaperone that allosterically regulates proper sorting of CLCNKA:BSND and CLCNKB:BSND channels at the basolateral plasma membrane domain and functional switch to ion conducting state. Mediates constitutive opening of channel common gates (PubMed:11734858, PubMed:18833191, PubMed:21593186, PubMed:23791703).</text>
</comment>
<comment type="subunit">
    <text evidence="6">Interacts with CLCNK channels. Forms probably heteromers with CLCNKA in the thin ascending limb of Henle and with CLCNKB in the thick ascending limb and more distal segments.</text>
</comment>
<comment type="subcellular location">
    <subcellularLocation>
        <location evidence="6">Basolateral cell membrane</location>
        <topology evidence="3">Multi-pass membrane protein</topology>
    </subcellularLocation>
    <text>Staining in membranes of the renal tubule is basolateral. Also detected in basolateral membranes of intercalated cells of the collecting duct, which are known to express CLCNKB as well. Both acid-secreting alpha-intercalated cells and base-secreting beta-intercalated cells express this protein basolaterally, but intervening AQP2-expressing principal cells appear devoid of protein expression. In the inner ear, colocalizes with CLCNK in K(+)-secreting marginal cells of the stria vascularis. The basolateral staining contrasts with the apical localization of the KCNQ1 K(+) channel. Also found in K(+)-secreting vestibular dark cells, where it colocalized in basolateral membranes with CLCNK below apical membranes that expressed KCNQ1.</text>
</comment>
<comment type="tissue specificity">
    <text evidence="5 6">Expression is evident in inner and outer stripes of the outer medulla of the kidney, most probably representing thin limbs of Henle's loop together with some collecting duct coursing through the outer stripe. In situ hybridization in fetal kidney at 18.5 dpc revealed a clear continuity between hybridization signals from the thin limb of Henle's loop and the distal convoluted tubule, suggesting that part of the expression pattern may result from expression in the thick ascending limb of Henle's loop. In addition, strong signals are present in a subset of cortical tubules, representing distal convoluted tubules or cortical collecting duct. Strong expression is also observed in the inner medulla of the kidney. This expression does not extend all the way to the tip of the papilla. Thus this signal most probably represents cells of the thin ascending limbs. In the inner ear, strong and exclusive expression is detected in marginal cells of the stria vascularis. In addition to cochlear signal, expression is observed in dark cells localized at the base of the crista ampullaris of the vestibular organ.</text>
</comment>
<comment type="PTM">
    <text evidence="2">Palmitoylation is necessary for activation of plasma membrane-inserted CLC-K/barttin channels.</text>
</comment>
<sequence length="307" mass="33813">MADEKTFRIGFIVLGLFLLSLGTFLMSHDRPQVYGTFYAMGSVMVIGGVIWSMCQCYPKITFVPADSDFQGILSPKALSLLETGLSEVKSPQPPYVRLWEEAAYDQSLPDFTHIQMKVMGYSEDPRPLLAPELKTGASSVREGEPRTAQAWMEAPVVVHRGSDENEGEKSHSQSSPSVGPQGSAPLASFHDDLDVGSSEGSSLQPSPNRDEPHRQVPWASRGPLDRFSDFALIDDTPTSEDTVLDGQAREAALPRKQQWSLRMKGETVQARAEEPEQEEEDLYYGLPDSPGNPLPDKELGFEPDIQG</sequence>
<accession>Q8VIM4</accession>
<accession>B1AZI5</accession>
<accession>Q8C740</accession>
<accession>Q8CHY0</accession>
<protein>
    <recommendedName>
        <fullName evidence="10">Barttin</fullName>
    </recommendedName>
</protein>
<organism>
    <name type="scientific">Mus musculus</name>
    <name type="common">Mouse</name>
    <dbReference type="NCBI Taxonomy" id="10090"/>
    <lineage>
        <taxon>Eukaryota</taxon>
        <taxon>Metazoa</taxon>
        <taxon>Chordata</taxon>
        <taxon>Craniata</taxon>
        <taxon>Vertebrata</taxon>
        <taxon>Euteleostomi</taxon>
        <taxon>Mammalia</taxon>
        <taxon>Eutheria</taxon>
        <taxon>Euarchontoglires</taxon>
        <taxon>Glires</taxon>
        <taxon>Rodentia</taxon>
        <taxon>Myomorpha</taxon>
        <taxon>Muroidea</taxon>
        <taxon>Muridae</taxon>
        <taxon>Murinae</taxon>
        <taxon>Mus</taxon>
        <taxon>Mus</taxon>
    </lineage>
</organism>
<reference key="1">
    <citation type="journal article" date="2001" name="Nat. Genet.">
        <title>Mutation of BSND causes Bartter syndrome with sensorineural deafness and kidney failure.</title>
        <authorList>
            <person name="Birkenhaeger R."/>
            <person name="Otto E."/>
            <person name="Schuermann M.J."/>
            <person name="Vollmer M."/>
            <person name="Ruf E.-M."/>
            <person name="Maier-Lutz I."/>
            <person name="Beekmann F."/>
            <person name="Fekete A."/>
            <person name="Omran H."/>
            <person name="Feldmann D."/>
            <person name="Milford D.V."/>
            <person name="Jeck N."/>
            <person name="Konrad M."/>
            <person name="Landau D."/>
            <person name="Knoers N.V.A.M."/>
            <person name="Antignac C."/>
            <person name="Sudbrak R."/>
            <person name="Kispert A."/>
            <person name="Hildebrandt F."/>
        </authorList>
    </citation>
    <scope>NUCLEOTIDE SEQUENCE [MRNA]</scope>
    <scope>TISSUE SPECIFICITY</scope>
    <source>
        <strain>C57BL/6J</strain>
    </source>
</reference>
<reference key="2">
    <citation type="submission" date="2003-08" db="EMBL/GenBank/DDBJ databases">
        <title>Functional phenotype of inner ear-specific chloride channel ClC-K and its accessory subunit.</title>
        <authorList>
            <person name="Nie L."/>
            <person name="Feng W."/>
            <person name="Dinglasan J.N."/>
            <person name="Yamoah E.N."/>
        </authorList>
    </citation>
    <scope>NUCLEOTIDE SEQUENCE [MRNA]</scope>
    <source>
        <strain>C57BL/6J</strain>
        <tissue>Cochlea</tissue>
    </source>
</reference>
<reference key="3">
    <citation type="journal article" date="2005" name="Science">
        <title>The transcriptional landscape of the mammalian genome.</title>
        <authorList>
            <person name="Carninci P."/>
            <person name="Kasukawa T."/>
            <person name="Katayama S."/>
            <person name="Gough J."/>
            <person name="Frith M.C."/>
            <person name="Maeda N."/>
            <person name="Oyama R."/>
            <person name="Ravasi T."/>
            <person name="Lenhard B."/>
            <person name="Wells C."/>
            <person name="Kodzius R."/>
            <person name="Shimokawa K."/>
            <person name="Bajic V.B."/>
            <person name="Brenner S.E."/>
            <person name="Batalov S."/>
            <person name="Forrest A.R."/>
            <person name="Zavolan M."/>
            <person name="Davis M.J."/>
            <person name="Wilming L.G."/>
            <person name="Aidinis V."/>
            <person name="Allen J.E."/>
            <person name="Ambesi-Impiombato A."/>
            <person name="Apweiler R."/>
            <person name="Aturaliya R.N."/>
            <person name="Bailey T.L."/>
            <person name="Bansal M."/>
            <person name="Baxter L."/>
            <person name="Beisel K.W."/>
            <person name="Bersano T."/>
            <person name="Bono H."/>
            <person name="Chalk A.M."/>
            <person name="Chiu K.P."/>
            <person name="Choudhary V."/>
            <person name="Christoffels A."/>
            <person name="Clutterbuck D.R."/>
            <person name="Crowe M.L."/>
            <person name="Dalla E."/>
            <person name="Dalrymple B.P."/>
            <person name="de Bono B."/>
            <person name="Della Gatta G."/>
            <person name="di Bernardo D."/>
            <person name="Down T."/>
            <person name="Engstrom P."/>
            <person name="Fagiolini M."/>
            <person name="Faulkner G."/>
            <person name="Fletcher C.F."/>
            <person name="Fukushima T."/>
            <person name="Furuno M."/>
            <person name="Futaki S."/>
            <person name="Gariboldi M."/>
            <person name="Georgii-Hemming P."/>
            <person name="Gingeras T.R."/>
            <person name="Gojobori T."/>
            <person name="Green R.E."/>
            <person name="Gustincich S."/>
            <person name="Harbers M."/>
            <person name="Hayashi Y."/>
            <person name="Hensch T.K."/>
            <person name="Hirokawa N."/>
            <person name="Hill D."/>
            <person name="Huminiecki L."/>
            <person name="Iacono M."/>
            <person name="Ikeo K."/>
            <person name="Iwama A."/>
            <person name="Ishikawa T."/>
            <person name="Jakt M."/>
            <person name="Kanapin A."/>
            <person name="Katoh M."/>
            <person name="Kawasawa Y."/>
            <person name="Kelso J."/>
            <person name="Kitamura H."/>
            <person name="Kitano H."/>
            <person name="Kollias G."/>
            <person name="Krishnan S.P."/>
            <person name="Kruger A."/>
            <person name="Kummerfeld S.K."/>
            <person name="Kurochkin I.V."/>
            <person name="Lareau L.F."/>
            <person name="Lazarevic D."/>
            <person name="Lipovich L."/>
            <person name="Liu J."/>
            <person name="Liuni S."/>
            <person name="McWilliam S."/>
            <person name="Madan Babu M."/>
            <person name="Madera M."/>
            <person name="Marchionni L."/>
            <person name="Matsuda H."/>
            <person name="Matsuzawa S."/>
            <person name="Miki H."/>
            <person name="Mignone F."/>
            <person name="Miyake S."/>
            <person name="Morris K."/>
            <person name="Mottagui-Tabar S."/>
            <person name="Mulder N."/>
            <person name="Nakano N."/>
            <person name="Nakauchi H."/>
            <person name="Ng P."/>
            <person name="Nilsson R."/>
            <person name="Nishiguchi S."/>
            <person name="Nishikawa S."/>
            <person name="Nori F."/>
            <person name="Ohara O."/>
            <person name="Okazaki Y."/>
            <person name="Orlando V."/>
            <person name="Pang K.C."/>
            <person name="Pavan W.J."/>
            <person name="Pavesi G."/>
            <person name="Pesole G."/>
            <person name="Petrovsky N."/>
            <person name="Piazza S."/>
            <person name="Reed J."/>
            <person name="Reid J.F."/>
            <person name="Ring B.Z."/>
            <person name="Ringwald M."/>
            <person name="Rost B."/>
            <person name="Ruan Y."/>
            <person name="Salzberg S.L."/>
            <person name="Sandelin A."/>
            <person name="Schneider C."/>
            <person name="Schoenbach C."/>
            <person name="Sekiguchi K."/>
            <person name="Semple C.A."/>
            <person name="Seno S."/>
            <person name="Sessa L."/>
            <person name="Sheng Y."/>
            <person name="Shibata Y."/>
            <person name="Shimada H."/>
            <person name="Shimada K."/>
            <person name="Silva D."/>
            <person name="Sinclair B."/>
            <person name="Sperling S."/>
            <person name="Stupka E."/>
            <person name="Sugiura K."/>
            <person name="Sultana R."/>
            <person name="Takenaka Y."/>
            <person name="Taki K."/>
            <person name="Tammoja K."/>
            <person name="Tan S.L."/>
            <person name="Tang S."/>
            <person name="Taylor M.S."/>
            <person name="Tegner J."/>
            <person name="Teichmann S.A."/>
            <person name="Ueda H.R."/>
            <person name="van Nimwegen E."/>
            <person name="Verardo R."/>
            <person name="Wei C.L."/>
            <person name="Yagi K."/>
            <person name="Yamanishi H."/>
            <person name="Zabarovsky E."/>
            <person name="Zhu S."/>
            <person name="Zimmer A."/>
            <person name="Hide W."/>
            <person name="Bult C."/>
            <person name="Grimmond S.M."/>
            <person name="Teasdale R.D."/>
            <person name="Liu E.T."/>
            <person name="Brusic V."/>
            <person name="Quackenbush J."/>
            <person name="Wahlestedt C."/>
            <person name="Mattick J.S."/>
            <person name="Hume D.A."/>
            <person name="Kai C."/>
            <person name="Sasaki D."/>
            <person name="Tomaru Y."/>
            <person name="Fukuda S."/>
            <person name="Kanamori-Katayama M."/>
            <person name="Suzuki M."/>
            <person name="Aoki J."/>
            <person name="Arakawa T."/>
            <person name="Iida J."/>
            <person name="Imamura K."/>
            <person name="Itoh M."/>
            <person name="Kato T."/>
            <person name="Kawaji H."/>
            <person name="Kawagashira N."/>
            <person name="Kawashima T."/>
            <person name="Kojima M."/>
            <person name="Kondo S."/>
            <person name="Konno H."/>
            <person name="Nakano K."/>
            <person name="Ninomiya N."/>
            <person name="Nishio T."/>
            <person name="Okada M."/>
            <person name="Plessy C."/>
            <person name="Shibata K."/>
            <person name="Shiraki T."/>
            <person name="Suzuki S."/>
            <person name="Tagami M."/>
            <person name="Waki K."/>
            <person name="Watahiki A."/>
            <person name="Okamura-Oho Y."/>
            <person name="Suzuki H."/>
            <person name="Kawai J."/>
            <person name="Hayashizaki Y."/>
        </authorList>
    </citation>
    <scope>NUCLEOTIDE SEQUENCE [LARGE SCALE MRNA]</scope>
    <source>
        <strain>C57BL/6J</strain>
        <tissue>Kidney</tissue>
    </source>
</reference>
<reference key="4">
    <citation type="journal article" date="2009" name="PLoS Biol.">
        <title>Lineage-specific biology revealed by a finished genome assembly of the mouse.</title>
        <authorList>
            <person name="Church D.M."/>
            <person name="Goodstadt L."/>
            <person name="Hillier L.W."/>
            <person name="Zody M.C."/>
            <person name="Goldstein S."/>
            <person name="She X."/>
            <person name="Bult C.J."/>
            <person name="Agarwala R."/>
            <person name="Cherry J.L."/>
            <person name="DiCuccio M."/>
            <person name="Hlavina W."/>
            <person name="Kapustin Y."/>
            <person name="Meric P."/>
            <person name="Maglott D."/>
            <person name="Birtle Z."/>
            <person name="Marques A.C."/>
            <person name="Graves T."/>
            <person name="Zhou S."/>
            <person name="Teague B."/>
            <person name="Potamousis K."/>
            <person name="Churas C."/>
            <person name="Place M."/>
            <person name="Herschleb J."/>
            <person name="Runnheim R."/>
            <person name="Forrest D."/>
            <person name="Amos-Landgraf J."/>
            <person name="Schwartz D.C."/>
            <person name="Cheng Z."/>
            <person name="Lindblad-Toh K."/>
            <person name="Eichler E.E."/>
            <person name="Ponting C.P."/>
        </authorList>
    </citation>
    <scope>NUCLEOTIDE SEQUENCE [LARGE SCALE GENOMIC DNA]</scope>
    <source>
        <strain>C57BL/6J</strain>
    </source>
</reference>
<reference key="5">
    <citation type="journal article" date="2004" name="Genome Res.">
        <title>The status, quality, and expansion of the NIH full-length cDNA project: the Mammalian Gene Collection (MGC).</title>
        <authorList>
            <consortium name="The MGC Project Team"/>
        </authorList>
    </citation>
    <scope>NUCLEOTIDE SEQUENCE [LARGE SCALE MRNA]</scope>
    <source>
        <strain>FVB/N</strain>
        <tissue>Kidney</tissue>
    </source>
</reference>
<reference key="6">
    <citation type="journal article" date="2001" name="Nature">
        <title>Barttin is a Cl- channel beta-subunit crucial for renal Cl-reabsorption and inner ear K+ secretion.</title>
        <authorList>
            <person name="Estevez R."/>
            <person name="Boettger T."/>
            <person name="Stein V."/>
            <person name="Birkenhaeger R."/>
            <person name="Otto E."/>
            <person name="Hildebrandt F."/>
            <person name="Jentsch T.J."/>
        </authorList>
    </citation>
    <scope>SUBUNIT</scope>
    <scope>SUBCELLULAR LOCATION</scope>
    <scope>TISSUE SPECIFICITY</scope>
</reference>
<reference key="7">
    <citation type="journal article" date="2010" name="Cell">
        <title>A tissue-specific atlas of mouse protein phosphorylation and expression.</title>
        <authorList>
            <person name="Huttlin E.L."/>
            <person name="Jedrychowski M.P."/>
            <person name="Elias J.E."/>
            <person name="Goswami T."/>
            <person name="Rad R."/>
            <person name="Beausoleil S.A."/>
            <person name="Villen J."/>
            <person name="Haas W."/>
            <person name="Sowa M.E."/>
            <person name="Gygi S.P."/>
        </authorList>
    </citation>
    <scope>PHOSPHORYLATION [LARGE SCALE ANALYSIS] AT SER-79; SER-107; SER-162 AND SER-228</scope>
    <scope>IDENTIFICATION BY MASS SPECTROMETRY [LARGE SCALE ANALYSIS]</scope>
    <source>
        <tissue>Kidney</tissue>
    </source>
</reference>
<reference key="8">
    <citation type="journal article" date="2008" name="EMBO J.">
        <title>Endocochlear potential depends on Cl- channels: mechanism underlying deafness in Bartter syndrome IV.</title>
        <authorList>
            <person name="Rickheit G."/>
            <person name="Maier H."/>
            <person name="Strenzke N."/>
            <person name="Andreescu C.E."/>
            <person name="De Zeeuw C.I."/>
            <person name="Muenscher A."/>
            <person name="Zdebik A.A."/>
            <person name="Jentsch T.J."/>
        </authorList>
    </citation>
    <scope>FUNCTION</scope>
</reference>
<reference key="9">
    <citation type="journal article" date="2011" name="Am. J. Physiol.">
        <title>Generation and analyses of R8L barttin knockin mouse.</title>
        <authorList>
            <person name="Nomura N."/>
            <person name="Tajima M."/>
            <person name="Sugawara N."/>
            <person name="Morimoto T."/>
            <person name="Kondo Y."/>
            <person name="Ohno M."/>
            <person name="Uchida K."/>
            <person name="Mutig K."/>
            <person name="Bachmann S."/>
            <person name="Soleimani M."/>
            <person name="Ohta E."/>
            <person name="Ohta A."/>
            <person name="Sohara E."/>
            <person name="Okado T."/>
            <person name="Rai T."/>
            <person name="Jentsch T.J."/>
            <person name="Sasaki S."/>
            <person name="Uchida S."/>
        </authorList>
    </citation>
    <scope>FUNCTION</scope>
</reference>
<reference key="10">
    <citation type="journal article" date="2013" name="Biochim. Biophys. Acta">
        <title>Characterization of the mouse ClC-K1/Barttin chloride channel.</title>
        <authorList>
            <person name="L'Hoste S."/>
            <person name="Diakov A."/>
            <person name="Andrini O."/>
            <person name="Genete M."/>
            <person name="Pinelli L."/>
            <person name="Grand T."/>
            <person name="Keck M."/>
            <person name="Paulais M."/>
            <person name="Beck L."/>
            <person name="Korbmacher C."/>
            <person name="Teulon J."/>
            <person name="Lourdel S."/>
        </authorList>
    </citation>
    <scope>FUNCTION</scope>
    <scope>MUTAGENESIS OF TYR-95</scope>
</reference>
<name>BSND_MOUSE</name>
<feature type="chain" id="PRO_0000065000" description="Barttin">
    <location>
        <begin position="1"/>
        <end position="307"/>
    </location>
</feature>
<feature type="topological domain" description="Cytoplasmic" evidence="3">
    <location>
        <begin position="1"/>
        <end position="5"/>
    </location>
</feature>
<feature type="transmembrane region" description="Helical" evidence="3">
    <location>
        <begin position="6"/>
        <end position="26"/>
    </location>
</feature>
<feature type="topological domain" description="Extracellular" evidence="3">
    <location>
        <begin position="27"/>
        <end position="32"/>
    </location>
</feature>
<feature type="transmembrane region" description="Helical" evidence="3">
    <location>
        <begin position="33"/>
        <end position="53"/>
    </location>
</feature>
<feature type="topological domain" description="Cytoplasmic" evidence="3">
    <location>
        <begin position="54"/>
        <end position="307"/>
    </location>
</feature>
<feature type="region of interest" description="Regulates channel membrane trafficking and anion conductance" evidence="2">
    <location>
        <begin position="1"/>
        <end position="72"/>
    </location>
</feature>
<feature type="region of interest" description="Disordered" evidence="4">
    <location>
        <begin position="135"/>
        <end position="154"/>
    </location>
</feature>
<feature type="region of interest" description="Disordered" evidence="4">
    <location>
        <begin position="161"/>
        <end position="224"/>
    </location>
</feature>
<feature type="region of interest" description="Disordered" evidence="4">
    <location>
        <begin position="255"/>
        <end position="307"/>
    </location>
</feature>
<feature type="compositionally biased region" description="Basic and acidic residues" evidence="4">
    <location>
        <begin position="161"/>
        <end position="171"/>
    </location>
</feature>
<feature type="compositionally biased region" description="Low complexity" evidence="4">
    <location>
        <begin position="172"/>
        <end position="183"/>
    </location>
</feature>
<feature type="compositionally biased region" description="Polar residues" evidence="4">
    <location>
        <begin position="198"/>
        <end position="207"/>
    </location>
</feature>
<feature type="modified residue" description="Phosphoserine" evidence="13">
    <location>
        <position position="79"/>
    </location>
</feature>
<feature type="modified residue" description="Phosphoserine" evidence="13">
    <location>
        <position position="107"/>
    </location>
</feature>
<feature type="modified residue" description="Phosphoserine" evidence="13">
    <location>
        <position position="162"/>
    </location>
</feature>
<feature type="modified residue" description="Phosphoserine" evidence="13">
    <location>
        <position position="228"/>
    </location>
</feature>
<feature type="modified residue" description="Phosphoserine" evidence="1">
    <location>
        <position position="289"/>
    </location>
</feature>
<feature type="lipid moiety-binding region" description="S-palmitoyl cysteine" evidence="2">
    <location>
        <position position="54"/>
    </location>
</feature>
<feature type="lipid moiety-binding region" description="S-palmitoyl cysteine" evidence="2">
    <location>
        <position position="56"/>
    </location>
</feature>
<feature type="mutagenesis site" description="Increases channel conductance." evidence="9">
    <original>Y</original>
    <variation>A</variation>
    <location>
        <position position="95"/>
    </location>
</feature>
<feature type="sequence conflict" description="In Ref. 1; AAL33907." evidence="11" ref="1">
    <original>T</original>
    <variation>A</variation>
    <location>
        <position position="83"/>
    </location>
</feature>
<feature type="sequence conflict" description="In Ref. 2; AAQ81629 and 5; AAH38287." evidence="11" ref="2 5">
    <original>N</original>
    <variation>D</variation>
    <location>
        <position position="292"/>
    </location>
</feature>
<dbReference type="EMBL" id="AF391088">
    <property type="protein sequence ID" value="AAL33907.1"/>
    <property type="molecule type" value="mRNA"/>
</dbReference>
<dbReference type="EMBL" id="AY373833">
    <property type="protein sequence ID" value="AAQ81629.1"/>
    <property type="molecule type" value="mRNA"/>
</dbReference>
<dbReference type="EMBL" id="AK052587">
    <property type="protein sequence ID" value="BAC35049.1"/>
    <property type="molecule type" value="mRNA"/>
</dbReference>
<dbReference type="EMBL" id="AL954352">
    <property type="status" value="NOT_ANNOTATED_CDS"/>
    <property type="molecule type" value="Genomic_DNA"/>
</dbReference>
<dbReference type="EMBL" id="BC038287">
    <property type="protein sequence ID" value="AAH38287.1"/>
    <property type="molecule type" value="mRNA"/>
</dbReference>
<dbReference type="CCDS" id="CCDS18419.1"/>
<dbReference type="RefSeq" id="NP_536706.2">
    <property type="nucleotide sequence ID" value="NM_080458.2"/>
</dbReference>
<dbReference type="FunCoup" id="Q8VIM4">
    <property type="interactions" value="96"/>
</dbReference>
<dbReference type="STRING" id="10090.ENSMUSP00000049563"/>
<dbReference type="iPTMnet" id="Q8VIM4"/>
<dbReference type="PhosphoSitePlus" id="Q8VIM4"/>
<dbReference type="SwissPalm" id="Q8VIM4"/>
<dbReference type="jPOST" id="Q8VIM4"/>
<dbReference type="PaxDb" id="10090-ENSMUSP00000049563"/>
<dbReference type="ProteomicsDB" id="273846"/>
<dbReference type="Antibodypedia" id="33230">
    <property type="antibodies" value="176 antibodies from 25 providers"/>
</dbReference>
<dbReference type="DNASU" id="140475"/>
<dbReference type="Ensembl" id="ENSMUST00000054472.4">
    <property type="protein sequence ID" value="ENSMUSP00000049563.4"/>
    <property type="gene ID" value="ENSMUSG00000025418.8"/>
</dbReference>
<dbReference type="GeneID" id="140475"/>
<dbReference type="KEGG" id="mmu:140475"/>
<dbReference type="UCSC" id="uc008tyj.1">
    <property type="organism name" value="mouse"/>
</dbReference>
<dbReference type="AGR" id="MGI:2153465"/>
<dbReference type="CTD" id="7809"/>
<dbReference type="MGI" id="MGI:2153465">
    <property type="gene designation" value="Bsnd"/>
</dbReference>
<dbReference type="VEuPathDB" id="HostDB:ENSMUSG00000025418"/>
<dbReference type="eggNOG" id="ENOG502S3DP">
    <property type="taxonomic scope" value="Eukaryota"/>
</dbReference>
<dbReference type="GeneTree" id="ENSGT00390000008549"/>
<dbReference type="HOGENOM" id="CLU_078815_0_0_1"/>
<dbReference type="InParanoid" id="Q8VIM4"/>
<dbReference type="OMA" id="FYAMGSV"/>
<dbReference type="OrthoDB" id="9944479at2759"/>
<dbReference type="TreeFam" id="TF335975"/>
<dbReference type="Reactome" id="R-MMU-2672351">
    <property type="pathway name" value="Stimuli-sensing channels"/>
</dbReference>
<dbReference type="BioGRID-ORCS" id="140475">
    <property type="hits" value="3 hits in 77 CRISPR screens"/>
</dbReference>
<dbReference type="PRO" id="PR:Q8VIM4"/>
<dbReference type="Proteomes" id="UP000000589">
    <property type="component" value="Chromosome 4"/>
</dbReference>
<dbReference type="RNAct" id="Q8VIM4">
    <property type="molecule type" value="protein"/>
</dbReference>
<dbReference type="Bgee" id="ENSMUSG00000025418">
    <property type="expression patterns" value="Expressed in inner renal medulla loop of Henle and 46 other cell types or tissues"/>
</dbReference>
<dbReference type="GO" id="GO:0016323">
    <property type="term" value="C:basolateral plasma membrane"/>
    <property type="evidence" value="ECO:0000314"/>
    <property type="project" value="UniProtKB"/>
</dbReference>
<dbReference type="GO" id="GO:0016020">
    <property type="term" value="C:membrane"/>
    <property type="evidence" value="ECO:0000266"/>
    <property type="project" value="MGI"/>
</dbReference>
<dbReference type="GO" id="GO:0005886">
    <property type="term" value="C:plasma membrane"/>
    <property type="evidence" value="ECO:0000314"/>
    <property type="project" value="UniProtKB"/>
</dbReference>
<dbReference type="GO" id="GO:0032991">
    <property type="term" value="C:protein-containing complex"/>
    <property type="evidence" value="ECO:0000314"/>
    <property type="project" value="UniProtKB"/>
</dbReference>
<dbReference type="GO" id="GO:0017081">
    <property type="term" value="F:chloride channel regulator activity"/>
    <property type="evidence" value="ECO:0000314"/>
    <property type="project" value="UniProtKB"/>
</dbReference>
<dbReference type="GO" id="GO:1902476">
    <property type="term" value="P:chloride transmembrane transport"/>
    <property type="evidence" value="ECO:0007669"/>
    <property type="project" value="GOC"/>
</dbReference>
<dbReference type="GO" id="GO:0030644">
    <property type="term" value="P:intracellular chloride ion homeostasis"/>
    <property type="evidence" value="ECO:0000303"/>
    <property type="project" value="UniProtKB"/>
</dbReference>
<dbReference type="GO" id="GO:0006873">
    <property type="term" value="P:intracellular monoatomic ion homeostasis"/>
    <property type="evidence" value="ECO:0000266"/>
    <property type="project" value="MGI"/>
</dbReference>
<dbReference type="GO" id="GO:0030007">
    <property type="term" value="P:intracellular potassium ion homeostasis"/>
    <property type="evidence" value="ECO:0000303"/>
    <property type="project" value="UniProtKB"/>
</dbReference>
<dbReference type="GO" id="GO:0007605">
    <property type="term" value="P:sensory perception of sound"/>
    <property type="evidence" value="ECO:0000315"/>
    <property type="project" value="UniProtKB"/>
</dbReference>
<dbReference type="InterPro" id="IPR029181">
    <property type="entry name" value="Barttin"/>
</dbReference>
<dbReference type="PANTHER" id="PTHR28399">
    <property type="entry name" value="BARTTIN"/>
    <property type="match status" value="1"/>
</dbReference>
<dbReference type="PANTHER" id="PTHR28399:SF1">
    <property type="entry name" value="BARTTIN"/>
    <property type="match status" value="1"/>
</dbReference>
<dbReference type="Pfam" id="PF15462">
    <property type="entry name" value="Barttin"/>
    <property type="match status" value="1"/>
</dbReference>
<gene>
    <name evidence="10 12" type="primary">Bsnd</name>
</gene>
<evidence type="ECO:0000250" key="1">
    <source>
        <dbReference type="UniProtKB" id="Q8R2H3"/>
    </source>
</evidence>
<evidence type="ECO:0000250" key="2">
    <source>
        <dbReference type="UniProtKB" id="Q8WZ55"/>
    </source>
</evidence>
<evidence type="ECO:0000255" key="3"/>
<evidence type="ECO:0000256" key="4">
    <source>
        <dbReference type="SAM" id="MobiDB-lite"/>
    </source>
</evidence>
<evidence type="ECO:0000269" key="5">
    <source>
    </source>
</evidence>
<evidence type="ECO:0000269" key="6">
    <source>
    </source>
</evidence>
<evidence type="ECO:0000269" key="7">
    <source>
    </source>
</evidence>
<evidence type="ECO:0000269" key="8">
    <source>
    </source>
</evidence>
<evidence type="ECO:0000269" key="9">
    <source>
    </source>
</evidence>
<evidence type="ECO:0000303" key="10">
    <source>
    </source>
</evidence>
<evidence type="ECO:0000305" key="11"/>
<evidence type="ECO:0000312" key="12">
    <source>
        <dbReference type="MGI" id="MGI:2153465"/>
    </source>
</evidence>
<evidence type="ECO:0007744" key="13">
    <source>
    </source>
</evidence>